<protein>
    <recommendedName>
        <fullName evidence="1">NADH-quinone oxidoreductase subunit C/D</fullName>
        <ecNumber evidence="1">7.1.1.-</ecNumber>
    </recommendedName>
    <alternativeName>
        <fullName evidence="1">NADH dehydrogenase I subunit C/D</fullName>
    </alternativeName>
    <alternativeName>
        <fullName evidence="1">NDH-1 subunit C/D</fullName>
    </alternativeName>
</protein>
<evidence type="ECO:0000255" key="1">
    <source>
        <dbReference type="HAMAP-Rule" id="MF_01359"/>
    </source>
</evidence>
<sequence>MSAFELVTELSARFKDAVLGEQMTADRFPTVWIRPDATIDVHRFLRQEIDRPFKMLVDLWAIDETARKHRDGLPPSGITIASHLMSHERNADIRIKIALDAEYPRAKSIGSVFPNAPWYEREAYDMFGVEFEAQPHSLRILLPPGWEGHPMRKTQPGRATERPLFNMTASLFDAKEHALAADPEKFGLPTHRDGVELMILNYGPHSMATHGVFRIVLALDGEEIVAARPDIGFHHRGAEKMAERQTWHNFLPYTDRVDYLGGVMGEMPYLQAVEKACGIKVPDRALTVRIMLSEMFRIMNHLLFYGTMAQDTGAMSPVFYMFTDRERGYRVIESITGARMHPGFFRIGGLSMDLPDGWDRLVREFLDWMPSRLDDYEGMVLRNEIFRARTKGIAAYDTAMALDWGVTGPGLRATGYAWDVRKARPYAGFENFDFEIPVGHAGDCYDRTVVRVEEIRQSLKIIRQCVDNMPSGPIKADHPLTTPPPRERMLHDIETMIHHFVSTSWGPVLPPGEYTGQVETVRGLTQFALISDGEPSSYRTRIRTPSFAHLQMISAVAPGMMVADLVAYLGSIDYVMSDVDR</sequence>
<organism>
    <name type="scientific">Rhodopseudomonas palustris (strain ATCC BAA-98 / CGA009)</name>
    <dbReference type="NCBI Taxonomy" id="258594"/>
    <lineage>
        <taxon>Bacteria</taxon>
        <taxon>Pseudomonadati</taxon>
        <taxon>Pseudomonadota</taxon>
        <taxon>Alphaproteobacteria</taxon>
        <taxon>Hyphomicrobiales</taxon>
        <taxon>Nitrobacteraceae</taxon>
        <taxon>Rhodopseudomonas</taxon>
    </lineage>
</organism>
<name>NUOCD_RHOPA</name>
<keyword id="KW-0997">Cell inner membrane</keyword>
<keyword id="KW-1003">Cell membrane</keyword>
<keyword id="KW-0472">Membrane</keyword>
<keyword id="KW-0511">Multifunctional enzyme</keyword>
<keyword id="KW-0520">NAD</keyword>
<keyword id="KW-0874">Quinone</keyword>
<keyword id="KW-1278">Translocase</keyword>
<keyword id="KW-0813">Transport</keyword>
<keyword id="KW-0830">Ubiquinone</keyword>
<dbReference type="EC" id="7.1.1.-" evidence="1"/>
<dbReference type="EMBL" id="BX572606">
    <property type="protein sequence ID" value="CAE29703.1"/>
    <property type="molecule type" value="Genomic_DNA"/>
</dbReference>
<dbReference type="RefSeq" id="WP_011159797.1">
    <property type="nucleotide sequence ID" value="NZ_CP116810.1"/>
</dbReference>
<dbReference type="SMR" id="Q6N1Z0"/>
<dbReference type="STRING" id="258594.RPA4262"/>
<dbReference type="GeneID" id="66895388"/>
<dbReference type="eggNOG" id="COG0649">
    <property type="taxonomic scope" value="Bacteria"/>
</dbReference>
<dbReference type="eggNOG" id="COG0852">
    <property type="taxonomic scope" value="Bacteria"/>
</dbReference>
<dbReference type="HOGENOM" id="CLU_015134_3_2_5"/>
<dbReference type="PhylomeDB" id="Q6N1Z0"/>
<dbReference type="GO" id="GO:0030964">
    <property type="term" value="C:NADH dehydrogenase complex"/>
    <property type="evidence" value="ECO:0007669"/>
    <property type="project" value="InterPro"/>
</dbReference>
<dbReference type="GO" id="GO:0005886">
    <property type="term" value="C:plasma membrane"/>
    <property type="evidence" value="ECO:0007669"/>
    <property type="project" value="UniProtKB-SubCell"/>
</dbReference>
<dbReference type="GO" id="GO:0051287">
    <property type="term" value="F:NAD binding"/>
    <property type="evidence" value="ECO:0007669"/>
    <property type="project" value="InterPro"/>
</dbReference>
<dbReference type="GO" id="GO:0008137">
    <property type="term" value="F:NADH dehydrogenase (ubiquinone) activity"/>
    <property type="evidence" value="ECO:0007669"/>
    <property type="project" value="InterPro"/>
</dbReference>
<dbReference type="GO" id="GO:0050136">
    <property type="term" value="F:NADH:ubiquinone reductase (non-electrogenic) activity"/>
    <property type="evidence" value="ECO:0007669"/>
    <property type="project" value="UniProtKB-UniRule"/>
</dbReference>
<dbReference type="GO" id="GO:0048038">
    <property type="term" value="F:quinone binding"/>
    <property type="evidence" value="ECO:0007669"/>
    <property type="project" value="UniProtKB-KW"/>
</dbReference>
<dbReference type="Gene3D" id="1.10.645.10">
    <property type="entry name" value="Cytochrome-c3 Hydrogenase, chain B"/>
    <property type="match status" value="1"/>
</dbReference>
<dbReference type="Gene3D" id="3.30.460.80">
    <property type="entry name" value="NADH:ubiquinone oxidoreductase, 30kDa subunit"/>
    <property type="match status" value="1"/>
</dbReference>
<dbReference type="HAMAP" id="MF_01359">
    <property type="entry name" value="NDH1_NuoCD_1"/>
    <property type="match status" value="1"/>
</dbReference>
<dbReference type="HAMAP" id="MF_01358">
    <property type="entry name" value="NDH1_NuoD"/>
    <property type="match status" value="1"/>
</dbReference>
<dbReference type="InterPro" id="IPR023062">
    <property type="entry name" value="NADH_DH_suCD"/>
</dbReference>
<dbReference type="InterPro" id="IPR001135">
    <property type="entry name" value="NADH_Q_OxRdtase_suD"/>
</dbReference>
<dbReference type="InterPro" id="IPR037232">
    <property type="entry name" value="NADH_quin_OxRdtase_su_C/D-like"/>
</dbReference>
<dbReference type="InterPro" id="IPR001268">
    <property type="entry name" value="NADH_UbQ_OxRdtase_30kDa_su"/>
</dbReference>
<dbReference type="InterPro" id="IPR014029">
    <property type="entry name" value="NADH_UbQ_OxRdtase_49kDa_CS"/>
</dbReference>
<dbReference type="InterPro" id="IPR022885">
    <property type="entry name" value="NDH1_su_D/H"/>
</dbReference>
<dbReference type="InterPro" id="IPR029014">
    <property type="entry name" value="NiFe-Hase_large"/>
</dbReference>
<dbReference type="NCBIfam" id="TIGR01962">
    <property type="entry name" value="NuoD"/>
    <property type="match status" value="1"/>
</dbReference>
<dbReference type="NCBIfam" id="NF004739">
    <property type="entry name" value="PRK06075.1"/>
    <property type="match status" value="1"/>
</dbReference>
<dbReference type="NCBIfam" id="NF008728">
    <property type="entry name" value="PRK11742.1"/>
    <property type="match status" value="1"/>
</dbReference>
<dbReference type="PANTHER" id="PTHR11993:SF45">
    <property type="entry name" value="NADH-QUINONE OXIDOREDUCTASE SUBUNIT C_D"/>
    <property type="match status" value="1"/>
</dbReference>
<dbReference type="PANTHER" id="PTHR11993">
    <property type="entry name" value="NADH-UBIQUINONE OXIDOREDUCTASE 49 KDA SUBUNIT"/>
    <property type="match status" value="1"/>
</dbReference>
<dbReference type="Pfam" id="PF00329">
    <property type="entry name" value="Complex1_30kDa"/>
    <property type="match status" value="1"/>
</dbReference>
<dbReference type="Pfam" id="PF00346">
    <property type="entry name" value="Complex1_49kDa"/>
    <property type="match status" value="1"/>
</dbReference>
<dbReference type="SUPFAM" id="SSF56762">
    <property type="entry name" value="HydB/Nqo4-like"/>
    <property type="match status" value="1"/>
</dbReference>
<dbReference type="SUPFAM" id="SSF143243">
    <property type="entry name" value="Nqo5-like"/>
    <property type="match status" value="1"/>
</dbReference>
<dbReference type="PROSITE" id="PS00535">
    <property type="entry name" value="COMPLEX1_49K"/>
    <property type="match status" value="1"/>
</dbReference>
<feature type="chain" id="PRO_0000358674" description="NADH-quinone oxidoreductase subunit C/D">
    <location>
        <begin position="1"/>
        <end position="581"/>
    </location>
</feature>
<feature type="region of interest" description="NADH dehydrogenase I subunit C" evidence="1">
    <location>
        <begin position="1"/>
        <end position="172"/>
    </location>
</feature>
<feature type="region of interest" description="NADH dehydrogenase I subunit D" evidence="1">
    <location>
        <begin position="196"/>
        <end position="581"/>
    </location>
</feature>
<accession>Q6N1Z0</accession>
<gene>
    <name evidence="1" type="primary">nuoC</name>
    <name evidence="1" type="synonym">nuoCD</name>
    <name evidence="1" type="synonym">nuoD</name>
    <name type="ordered locus">RPA4262</name>
</gene>
<proteinExistence type="inferred from homology"/>
<comment type="function">
    <text evidence="1">NDH-1 shuttles electrons from NADH, via FMN and iron-sulfur (Fe-S) centers, to quinones in the respiratory chain. The immediate electron acceptor for the enzyme in this species is believed to be ubiquinone. Couples the redox reaction to proton translocation (for every two electrons transferred, four hydrogen ions are translocated across the cytoplasmic membrane), and thus conserves the redox energy in a proton gradient.</text>
</comment>
<comment type="catalytic activity">
    <reaction evidence="1">
        <text>a quinone + NADH + 5 H(+)(in) = a quinol + NAD(+) + 4 H(+)(out)</text>
        <dbReference type="Rhea" id="RHEA:57888"/>
        <dbReference type="ChEBI" id="CHEBI:15378"/>
        <dbReference type="ChEBI" id="CHEBI:24646"/>
        <dbReference type="ChEBI" id="CHEBI:57540"/>
        <dbReference type="ChEBI" id="CHEBI:57945"/>
        <dbReference type="ChEBI" id="CHEBI:132124"/>
    </reaction>
</comment>
<comment type="subunit">
    <text evidence="1">NDH-1 is composed of 13 different subunits. Subunits NuoB, CD, E, F, and G constitute the peripheral sector of the complex.</text>
</comment>
<comment type="subcellular location">
    <subcellularLocation>
        <location evidence="1">Cell inner membrane</location>
        <topology evidence="1">Peripheral membrane protein</topology>
        <orientation evidence="1">Cytoplasmic side</orientation>
    </subcellularLocation>
</comment>
<comment type="similarity">
    <text evidence="1">In the N-terminal section; belongs to the complex I 30 kDa subunit family.</text>
</comment>
<comment type="similarity">
    <text evidence="1">In the C-terminal section; belongs to the complex I 49 kDa subunit family.</text>
</comment>
<reference key="1">
    <citation type="journal article" date="2004" name="Nat. Biotechnol.">
        <title>Complete genome sequence of the metabolically versatile photosynthetic bacterium Rhodopseudomonas palustris.</title>
        <authorList>
            <person name="Larimer F.W."/>
            <person name="Chain P."/>
            <person name="Hauser L."/>
            <person name="Lamerdin J.E."/>
            <person name="Malfatti S."/>
            <person name="Do L."/>
            <person name="Land M.L."/>
            <person name="Pelletier D.A."/>
            <person name="Beatty J.T."/>
            <person name="Lang A.S."/>
            <person name="Tabita F.R."/>
            <person name="Gibson J.L."/>
            <person name="Hanson T.E."/>
            <person name="Bobst C."/>
            <person name="Torres y Torres J.L."/>
            <person name="Peres C."/>
            <person name="Harrison F.H."/>
            <person name="Gibson J."/>
            <person name="Harwood C.S."/>
        </authorList>
    </citation>
    <scope>NUCLEOTIDE SEQUENCE [LARGE SCALE GENOMIC DNA]</scope>
    <source>
        <strain>ATCC BAA-98 / CGA009</strain>
    </source>
</reference>